<comment type="function">
    <text evidence="1">Catalyzes the reduction of hydroxylamine to form NH(3) and H(2)O.</text>
</comment>
<comment type="catalytic activity">
    <reaction evidence="1">
        <text>A + NH4(+) + H2O = hydroxylamine + AH2 + H(+)</text>
        <dbReference type="Rhea" id="RHEA:22052"/>
        <dbReference type="ChEBI" id="CHEBI:13193"/>
        <dbReference type="ChEBI" id="CHEBI:15377"/>
        <dbReference type="ChEBI" id="CHEBI:15378"/>
        <dbReference type="ChEBI" id="CHEBI:15429"/>
        <dbReference type="ChEBI" id="CHEBI:17499"/>
        <dbReference type="ChEBI" id="CHEBI:28938"/>
        <dbReference type="EC" id="1.7.99.1"/>
    </reaction>
</comment>
<comment type="cofactor">
    <cofactor evidence="1">
        <name>[4Fe-4S] cluster</name>
        <dbReference type="ChEBI" id="CHEBI:49883"/>
    </cofactor>
    <text evidence="1">Binds 1 [4Fe-4S] cluster.</text>
</comment>
<comment type="cofactor">
    <cofactor evidence="1">
        <name>hybrid [4Fe-2O-2S] cluster</name>
        <dbReference type="ChEBI" id="CHEBI:60519"/>
    </cofactor>
    <text evidence="1">Binds 1 hybrid [4Fe-2O-2S] cluster.</text>
</comment>
<comment type="subcellular location">
    <subcellularLocation>
        <location evidence="1">Cytoplasm</location>
    </subcellularLocation>
</comment>
<comment type="similarity">
    <text evidence="1">Belongs to the HCP family.</text>
</comment>
<organism>
    <name type="scientific">Acidithiobacillus ferrooxidans (strain ATCC 53993 / BNL-5-31)</name>
    <name type="common">Leptospirillum ferrooxidans (ATCC 53993)</name>
    <dbReference type="NCBI Taxonomy" id="380394"/>
    <lineage>
        <taxon>Bacteria</taxon>
        <taxon>Pseudomonadati</taxon>
        <taxon>Pseudomonadota</taxon>
        <taxon>Acidithiobacillia</taxon>
        <taxon>Acidithiobacillales</taxon>
        <taxon>Acidithiobacillaceae</taxon>
        <taxon>Acidithiobacillus</taxon>
    </lineage>
</organism>
<accession>B5ERR7</accession>
<evidence type="ECO:0000255" key="1">
    <source>
        <dbReference type="HAMAP-Rule" id="MF_00069"/>
    </source>
</evidence>
<proteinExistence type="inferred from homology"/>
<dbReference type="EC" id="1.7.99.1" evidence="1"/>
<dbReference type="EMBL" id="CP001132">
    <property type="protein sequence ID" value="ACH83588.1"/>
    <property type="molecule type" value="Genomic_DNA"/>
</dbReference>
<dbReference type="SMR" id="B5ERR7"/>
<dbReference type="KEGG" id="afe:Lferr_1355"/>
<dbReference type="eggNOG" id="COG1151">
    <property type="taxonomic scope" value="Bacteria"/>
</dbReference>
<dbReference type="HOGENOM" id="CLU_038344_2_0_6"/>
<dbReference type="GO" id="GO:0005737">
    <property type="term" value="C:cytoplasm"/>
    <property type="evidence" value="ECO:0007669"/>
    <property type="project" value="UniProtKB-SubCell"/>
</dbReference>
<dbReference type="GO" id="GO:0051539">
    <property type="term" value="F:4 iron, 4 sulfur cluster binding"/>
    <property type="evidence" value="ECO:0007669"/>
    <property type="project" value="UniProtKB-KW"/>
</dbReference>
<dbReference type="GO" id="GO:0050418">
    <property type="term" value="F:hydroxylamine reductase activity"/>
    <property type="evidence" value="ECO:0007669"/>
    <property type="project" value="UniProtKB-UniRule"/>
</dbReference>
<dbReference type="GO" id="GO:0046872">
    <property type="term" value="F:metal ion binding"/>
    <property type="evidence" value="ECO:0007669"/>
    <property type="project" value="UniProtKB-KW"/>
</dbReference>
<dbReference type="GO" id="GO:0004601">
    <property type="term" value="F:peroxidase activity"/>
    <property type="evidence" value="ECO:0007669"/>
    <property type="project" value="TreeGrafter"/>
</dbReference>
<dbReference type="GO" id="GO:0042542">
    <property type="term" value="P:response to hydrogen peroxide"/>
    <property type="evidence" value="ECO:0007669"/>
    <property type="project" value="TreeGrafter"/>
</dbReference>
<dbReference type="CDD" id="cd01914">
    <property type="entry name" value="HCP"/>
    <property type="match status" value="1"/>
</dbReference>
<dbReference type="FunFam" id="3.40.50.2030:FF:000002">
    <property type="entry name" value="Hydroxylamine reductase"/>
    <property type="match status" value="1"/>
</dbReference>
<dbReference type="Gene3D" id="1.20.1270.20">
    <property type="match status" value="2"/>
</dbReference>
<dbReference type="Gene3D" id="3.40.50.2030">
    <property type="match status" value="2"/>
</dbReference>
<dbReference type="HAMAP" id="MF_00069">
    <property type="entry name" value="Hydroxylam_reduct"/>
    <property type="match status" value="1"/>
</dbReference>
<dbReference type="InterPro" id="IPR004137">
    <property type="entry name" value="HCP/CODH"/>
</dbReference>
<dbReference type="InterPro" id="IPR010048">
    <property type="entry name" value="Hydroxylam_reduct"/>
</dbReference>
<dbReference type="InterPro" id="IPR016099">
    <property type="entry name" value="Prismane-like_a/b-sand"/>
</dbReference>
<dbReference type="InterPro" id="IPR011254">
    <property type="entry name" value="Prismane-like_sf"/>
</dbReference>
<dbReference type="InterPro" id="IPR016100">
    <property type="entry name" value="Prismane_a-bundle"/>
</dbReference>
<dbReference type="NCBIfam" id="TIGR01703">
    <property type="entry name" value="hybrid_clust"/>
    <property type="match status" value="1"/>
</dbReference>
<dbReference type="NCBIfam" id="NF003658">
    <property type="entry name" value="PRK05290.1"/>
    <property type="match status" value="1"/>
</dbReference>
<dbReference type="PANTHER" id="PTHR30109">
    <property type="entry name" value="HYDROXYLAMINE REDUCTASE"/>
    <property type="match status" value="1"/>
</dbReference>
<dbReference type="PANTHER" id="PTHR30109:SF0">
    <property type="entry name" value="HYDROXYLAMINE REDUCTASE"/>
    <property type="match status" value="1"/>
</dbReference>
<dbReference type="Pfam" id="PF03063">
    <property type="entry name" value="Prismane"/>
    <property type="match status" value="1"/>
</dbReference>
<dbReference type="PIRSF" id="PIRSF000076">
    <property type="entry name" value="HCP"/>
    <property type="match status" value="1"/>
</dbReference>
<dbReference type="SUPFAM" id="SSF56821">
    <property type="entry name" value="Prismane protein-like"/>
    <property type="match status" value="1"/>
</dbReference>
<keyword id="KW-0004">4Fe-4S</keyword>
<keyword id="KW-0963">Cytoplasm</keyword>
<keyword id="KW-0408">Iron</keyword>
<keyword id="KW-0411">Iron-sulfur</keyword>
<keyword id="KW-0479">Metal-binding</keyword>
<keyword id="KW-0560">Oxidoreductase</keyword>
<feature type="chain" id="PRO_1000092326" description="Hydroxylamine reductase">
    <location>
        <begin position="1"/>
        <end position="557"/>
    </location>
</feature>
<feature type="binding site" evidence="1">
    <location>
        <position position="4"/>
    </location>
    <ligand>
        <name>[4Fe-4S] cluster</name>
        <dbReference type="ChEBI" id="CHEBI:49883"/>
    </ligand>
</feature>
<feature type="binding site" evidence="1">
    <location>
        <position position="7"/>
    </location>
    <ligand>
        <name>[4Fe-4S] cluster</name>
        <dbReference type="ChEBI" id="CHEBI:49883"/>
    </ligand>
</feature>
<feature type="binding site" evidence="1">
    <location>
        <position position="19"/>
    </location>
    <ligand>
        <name>[4Fe-4S] cluster</name>
        <dbReference type="ChEBI" id="CHEBI:49883"/>
    </ligand>
</feature>
<feature type="binding site" evidence="1">
    <location>
        <position position="26"/>
    </location>
    <ligand>
        <name>[4Fe-4S] cluster</name>
        <dbReference type="ChEBI" id="CHEBI:49883"/>
    </ligand>
</feature>
<feature type="binding site" evidence="1">
    <location>
        <position position="253"/>
    </location>
    <ligand>
        <name>hybrid [4Fe-2O-2S] cluster</name>
        <dbReference type="ChEBI" id="CHEBI:60519"/>
    </ligand>
</feature>
<feature type="binding site" evidence="1">
    <location>
        <position position="277"/>
    </location>
    <ligand>
        <name>hybrid [4Fe-2O-2S] cluster</name>
        <dbReference type="ChEBI" id="CHEBI:60519"/>
    </ligand>
</feature>
<feature type="binding site" evidence="1">
    <location>
        <position position="321"/>
    </location>
    <ligand>
        <name>hybrid [4Fe-2O-2S] cluster</name>
        <dbReference type="ChEBI" id="CHEBI:60519"/>
    </ligand>
</feature>
<feature type="binding site" description="via persulfide group" evidence="1">
    <location>
        <position position="408"/>
    </location>
    <ligand>
        <name>hybrid [4Fe-2O-2S] cluster</name>
        <dbReference type="ChEBI" id="CHEBI:60519"/>
    </ligand>
</feature>
<feature type="binding site" evidence="1">
    <location>
        <position position="436"/>
    </location>
    <ligand>
        <name>hybrid [4Fe-2O-2S] cluster</name>
        <dbReference type="ChEBI" id="CHEBI:60519"/>
    </ligand>
</feature>
<feature type="binding site" evidence="1">
    <location>
        <position position="461"/>
    </location>
    <ligand>
        <name>hybrid [4Fe-2O-2S] cluster</name>
        <dbReference type="ChEBI" id="CHEBI:60519"/>
    </ligand>
</feature>
<feature type="binding site" evidence="1">
    <location>
        <position position="495"/>
    </location>
    <ligand>
        <name>hybrid [4Fe-2O-2S] cluster</name>
        <dbReference type="ChEBI" id="CHEBI:60519"/>
    </ligand>
</feature>
<feature type="binding site" evidence="1">
    <location>
        <position position="497"/>
    </location>
    <ligand>
        <name>hybrid [4Fe-2O-2S] cluster</name>
        <dbReference type="ChEBI" id="CHEBI:60519"/>
    </ligand>
</feature>
<feature type="modified residue" description="Cysteine persulfide" evidence="1">
    <location>
        <position position="408"/>
    </location>
</feature>
<protein>
    <recommendedName>
        <fullName evidence="1">Hydroxylamine reductase</fullName>
        <ecNumber evidence="1">1.7.99.1</ecNumber>
    </recommendedName>
    <alternativeName>
        <fullName evidence="1">Hybrid-cluster protein</fullName>
        <shortName evidence="1">HCP</shortName>
    </alternativeName>
    <alternativeName>
        <fullName evidence="1">Prismane protein</fullName>
    </alternativeName>
</protein>
<sequence length="557" mass="60580">MMFCYQCEQTTRSPAGIGCTSEPGTCGKDEATAGLQDILTHLMKGIAQYARRARAMGVADRRTDDFIFYGLFTTLTNVNFTATRFVHLIQEASKRRERIKLLYEEAAREQGKTPEILSGPALFQPADSLEQLLRQAPSVAINADVEHLGSDVIGARALILYGMKGVAAYAQHARVLGYQSDEVDAQAEEILDYLASNPTDLDEMLEESLEVGRLNLKVMELLDVANTDSFGAQEITSVRISPIQGKAILVSGHDLHDLKQILEQTKDQGINVYTHGEMLPANAYPLLKAYPHLAGNLGGAWQDQQREFADFPGPIVMTSNCIIEPGRSYKNRIFTLGPVGWPGVRHIDNGDFTPVIQAAKALPGFTADAKEQRITIGFGHHTLLGVADKIVDAVKHGDIRHFFLVGGCDGVSPARNYFTEVADNAPADSVVMTLGCGKYRFNKHEFGDIGGIPRLLDIGQCNDAHSAIRVAGALAEAFNCGVNDLPLSIMLSWFEQKATAIHLSLLALGIKGIKLGPTLPAYLTPTLVQKLQSRFDLDLDLIGEAQADLQTALAHTA</sequence>
<gene>
    <name evidence="1" type="primary">hcp</name>
    <name type="ordered locus">Lferr_1355</name>
</gene>
<name>HCP_ACIF5</name>
<reference key="1">
    <citation type="submission" date="2008-08" db="EMBL/GenBank/DDBJ databases">
        <title>Complete sequence of Acidithiobacillus ferrooxidans ATCC 53993.</title>
        <authorList>
            <person name="Lucas S."/>
            <person name="Copeland A."/>
            <person name="Lapidus A."/>
            <person name="Glavina del Rio T."/>
            <person name="Dalin E."/>
            <person name="Tice H."/>
            <person name="Bruce D."/>
            <person name="Goodwin L."/>
            <person name="Pitluck S."/>
            <person name="Sims D."/>
            <person name="Brettin T."/>
            <person name="Detter J.C."/>
            <person name="Han C."/>
            <person name="Kuske C.R."/>
            <person name="Larimer F."/>
            <person name="Land M."/>
            <person name="Hauser L."/>
            <person name="Kyrpides N."/>
            <person name="Lykidis A."/>
            <person name="Borole A.P."/>
        </authorList>
    </citation>
    <scope>NUCLEOTIDE SEQUENCE [LARGE SCALE GENOMIC DNA]</scope>
    <source>
        <strain>ATCC 53993 / BNL-5-31</strain>
    </source>
</reference>